<proteinExistence type="evidence at protein level"/>
<reference key="1">
    <citation type="journal article" date="2004" name="Genome Res.">
        <title>The status, quality, and expansion of the NIH full-length cDNA project: the Mammalian Gene Collection (MGC).</title>
        <authorList>
            <consortium name="The MGC Project Team"/>
        </authorList>
    </citation>
    <scope>NUCLEOTIDE SEQUENCE [LARGE SCALE MRNA]</scope>
    <source>
        <strain>C57BL/6J</strain>
        <tissue>Brain</tissue>
        <tissue>Olfactory epithelium</tissue>
    </source>
</reference>
<reference key="2">
    <citation type="journal article" date="1998" name="Hum. Mol. Genet.">
        <title>Characterization of the myotubularin dual specificity phosphatase gene family from yeast to human.</title>
        <authorList>
            <person name="Laporte J."/>
            <person name="Blondeau F."/>
            <person name="Buj-Bello A."/>
            <person name="Tentler D."/>
            <person name="Kretz C."/>
            <person name="Dahl N."/>
            <person name="Mandel J.-L."/>
        </authorList>
    </citation>
    <scope>NUCLEOTIDE SEQUENCE [MRNA] OF 392-545</scope>
</reference>
<reference key="3">
    <citation type="journal article" date="2003" name="Proc. Natl. Acad. Sci. U.S.A.">
        <title>Characterization of myotubularin-related protein 7 and its binding partner, myotubularin-related protein 9.</title>
        <authorList>
            <person name="Mochizuki Y."/>
            <person name="Majerus P.W."/>
        </authorList>
    </citation>
    <scope>FUNCTION</scope>
    <scope>INTERACTION WITH MTMR6 AND MTMR7</scope>
    <scope>SUBUNIT</scope>
    <scope>DOMAIN</scope>
</reference>
<reference key="4">
    <citation type="journal article" date="2010" name="Cell">
        <title>A tissue-specific atlas of mouse protein phosphorylation and expression.</title>
        <authorList>
            <person name="Huttlin E.L."/>
            <person name="Jedrychowski M.P."/>
            <person name="Elias J.E."/>
            <person name="Goswami T."/>
            <person name="Rad R."/>
            <person name="Beausoleil S.A."/>
            <person name="Villen J."/>
            <person name="Haas W."/>
            <person name="Sowa M.E."/>
            <person name="Gygi S.P."/>
        </authorList>
    </citation>
    <scope>IDENTIFICATION BY MASS SPECTROMETRY [LARGE SCALE ANALYSIS]</scope>
    <source>
        <tissue>Brain</tissue>
        <tissue>Lung</tissue>
        <tissue>Testis</tissue>
    </source>
</reference>
<reference key="5">
    <citation type="journal article" date="2014" name="Proc. Natl. Acad. Sci. U.S.A.">
        <title>Sequential breakdown of 3-phosphorylated phosphoinositides is essential for the completion of macropinocytosis.</title>
        <authorList>
            <person name="Maekawa M."/>
            <person name="Terasaka S."/>
            <person name="Mochizuki Y."/>
            <person name="Kawai K."/>
            <person name="Ikeda Y."/>
            <person name="Araki N."/>
            <person name="Skolnik E.Y."/>
            <person name="Taguchi T."/>
            <person name="Arai H."/>
        </authorList>
    </citation>
    <scope>SUBCELLULAR LOCATION</scope>
    <scope>DOMAIN</scope>
    <scope>MUTAGENESIS OF 2-GLU--MET-108</scope>
</reference>
<comment type="function">
    <text evidence="1 4">Acts as an adapter for myotubularin-related phosphatases (PubMed:12890864). Increases lipid phosphatase MTMR6 catalytic activity, specifically towards phosphatidylinositol 3,5-bisphosphate, and MTMR6 binding affinity for phosphorylated phosphatidylinositols (By similarity). Positively regulates lipid phosphatase MTMR7 catalytic activity (PubMed:12890864). The formation of the MTMR6-MTMR9 complex, stabilizes both MTMR6 and MTMR9 protein levels (By similarity). Plays a role in the late stages of macropinocytosis possibly by regulating MTMR6-mediated dephosphorylation of phosphatidylinositol 3-phosphate in membrane ruffles (By similarity). Negatively regulates DNA damage-induced apoptosis, in part via its association with MTMR6 (By similarity). Does not bind mono-, di- and tri-phosphorylated phosphatidylinositols, phosphatidic acid and phosphatidylserine (By similarity).</text>
</comment>
<comment type="subunit">
    <text evidence="4">Homodimer (PubMed:12890864). Heterodimer (via C-terminus) with lipid phosphatase MTMR6 (via C-terminus) (PubMed:12890864). Heterodimer (via coiled coil domain) with lipid phosphatase MTMR7 (via C-terminus) (PubMed:12890864).</text>
</comment>
<comment type="subcellular location">
    <subcellularLocation>
        <location evidence="5">Cytoplasm</location>
    </subcellularLocation>
    <subcellularLocation>
        <location evidence="5">Cell projection</location>
        <location evidence="5">Ruffle membrane</location>
        <topology evidence="6">Peripheral membrane protein</topology>
        <orientation evidence="6">Cytoplasmic side</orientation>
    </subcellularLocation>
    <subcellularLocation>
        <location evidence="1">Cytoplasm</location>
        <location evidence="1">Perinuclear region</location>
    </subcellularLocation>
    <subcellularLocation>
        <location evidence="1">Endoplasmic reticulum</location>
    </subcellularLocation>
    <text evidence="1 5">Localizes to ruffles during EGF-induced macropinocytosis (PubMed:24591580). Colocalizes with MTMR6 to the perinuclear region (By similarity). Partially localizes to the endoplasmic reticulum (By similarity).</text>
</comment>
<comment type="domain">
    <text evidence="5">The GRAM domain is required for cell membrane localization.</text>
</comment>
<comment type="domain">
    <text evidence="4">The coiled coil domain mediates interaction with MTMR9.</text>
</comment>
<comment type="similarity">
    <text evidence="6">Belongs to the protein-tyrosine phosphatase family. Non-receptor class myotubularin subfamily.</text>
</comment>
<comment type="caution">
    <text evidence="6">Although it belongs to the non-receptor class myotubularin subfamily, lacks the conserved active site cysteine residue at position 333 in the dsPTPase catalytic loop, suggesting that it has no carboxypeptidase activity.</text>
</comment>
<comment type="sequence caution" evidence="6">
    <conflict type="frameshift">
        <sequence resource="EMBL-CDS" id="AAC80003"/>
    </conflict>
</comment>
<evidence type="ECO:0000250" key="1">
    <source>
        <dbReference type="UniProtKB" id="Q96QG7"/>
    </source>
</evidence>
<evidence type="ECO:0000255" key="2"/>
<evidence type="ECO:0000255" key="3">
    <source>
        <dbReference type="PROSITE-ProRule" id="PRU00669"/>
    </source>
</evidence>
<evidence type="ECO:0000269" key="4">
    <source>
    </source>
</evidence>
<evidence type="ECO:0000269" key="5">
    <source>
    </source>
</evidence>
<evidence type="ECO:0000305" key="6"/>
<gene>
    <name type="primary">Mtmr9</name>
    <name type="synonym">Mtmr3</name>
</gene>
<name>MTMR9_MOUSE</name>
<organism>
    <name type="scientific">Mus musculus</name>
    <name type="common">Mouse</name>
    <dbReference type="NCBI Taxonomy" id="10090"/>
    <lineage>
        <taxon>Eukaryota</taxon>
        <taxon>Metazoa</taxon>
        <taxon>Chordata</taxon>
        <taxon>Craniata</taxon>
        <taxon>Vertebrata</taxon>
        <taxon>Euteleostomi</taxon>
        <taxon>Mammalia</taxon>
        <taxon>Eutheria</taxon>
        <taxon>Euarchontoglires</taxon>
        <taxon>Glires</taxon>
        <taxon>Rodentia</taxon>
        <taxon>Myomorpha</taxon>
        <taxon>Muroidea</taxon>
        <taxon>Muridae</taxon>
        <taxon>Murinae</taxon>
        <taxon>Mus</taxon>
        <taxon>Mus</taxon>
    </lineage>
</organism>
<protein>
    <recommendedName>
        <fullName>Myotubularin-related protein 9</fullName>
    </recommendedName>
    <alternativeName>
        <fullName evidence="6">Inactive phosphatidylinositol 3-phosphatase 9</fullName>
    </alternativeName>
</protein>
<accession>Q9Z2D0</accession>
<accession>A6H6P1</accession>
<accession>Q80XL4</accession>
<feature type="chain" id="PRO_0000094944" description="Myotubularin-related protein 9">
    <location>
        <begin position="1"/>
        <end position="545"/>
    </location>
</feature>
<feature type="domain" description="GRAM" evidence="2">
    <location>
        <begin position="4"/>
        <end position="99"/>
    </location>
</feature>
<feature type="domain" description="Myotubularin phosphatase" evidence="3">
    <location>
        <begin position="123"/>
        <end position="498"/>
    </location>
</feature>
<feature type="coiled-coil region" evidence="2">
    <location>
        <begin position="508"/>
        <end position="542"/>
    </location>
</feature>
<feature type="modified residue" description="N-acetylmethionine" evidence="1">
    <location>
        <position position="1"/>
    </location>
</feature>
<feature type="mutagenesis site" description="Loss of cell membrane recruitment following EGF stimulation." evidence="5">
    <location>
        <begin position="2"/>
        <end position="108"/>
    </location>
</feature>
<dbReference type="EMBL" id="BC046275">
    <property type="protein sequence ID" value="AAH46275.1"/>
    <property type="molecule type" value="mRNA"/>
</dbReference>
<dbReference type="EMBL" id="BC145946">
    <property type="protein sequence ID" value="AAI45947.1"/>
    <property type="molecule type" value="mRNA"/>
</dbReference>
<dbReference type="EMBL" id="BC145948">
    <property type="protein sequence ID" value="AAI45949.1"/>
    <property type="molecule type" value="mRNA"/>
</dbReference>
<dbReference type="EMBL" id="AF073881">
    <property type="protein sequence ID" value="AAC80003.1"/>
    <property type="status" value="ALT_FRAME"/>
    <property type="molecule type" value="mRNA"/>
</dbReference>
<dbReference type="CCDS" id="CCDS27203.1"/>
<dbReference type="RefSeq" id="NP_808262.1">
    <property type="nucleotide sequence ID" value="NM_177594.1"/>
</dbReference>
<dbReference type="SMR" id="Q9Z2D0"/>
<dbReference type="BioGRID" id="229150">
    <property type="interactions" value="5"/>
</dbReference>
<dbReference type="FunCoup" id="Q9Z2D0">
    <property type="interactions" value="2574"/>
</dbReference>
<dbReference type="IntAct" id="Q9Z2D0">
    <property type="interactions" value="1"/>
</dbReference>
<dbReference type="MINT" id="Q9Z2D0"/>
<dbReference type="STRING" id="10090.ENSMUSP00000059894"/>
<dbReference type="GlyGen" id="Q9Z2D0">
    <property type="glycosylation" value="2 sites, 1 N-linked glycan (1 site), 1 O-linked glycan (1 site)"/>
</dbReference>
<dbReference type="iPTMnet" id="Q9Z2D0"/>
<dbReference type="PhosphoSitePlus" id="Q9Z2D0"/>
<dbReference type="PaxDb" id="10090-ENSMUSP00000059894"/>
<dbReference type="ProteomicsDB" id="291455"/>
<dbReference type="Pumba" id="Q9Z2D0"/>
<dbReference type="Antibodypedia" id="22096">
    <property type="antibodies" value="119 antibodies from 28 providers"/>
</dbReference>
<dbReference type="DNASU" id="210376"/>
<dbReference type="Ensembl" id="ENSMUST00000058679.7">
    <property type="protein sequence ID" value="ENSMUSP00000059894.6"/>
    <property type="gene ID" value="ENSMUSG00000035078.7"/>
</dbReference>
<dbReference type="GeneID" id="210376"/>
<dbReference type="KEGG" id="mmu:210376"/>
<dbReference type="UCSC" id="uc007uht.1">
    <property type="organism name" value="mouse"/>
</dbReference>
<dbReference type="AGR" id="MGI:2442842"/>
<dbReference type="CTD" id="66036"/>
<dbReference type="MGI" id="MGI:2442842">
    <property type="gene designation" value="Mtmr9"/>
</dbReference>
<dbReference type="VEuPathDB" id="HostDB:ENSMUSG00000035078"/>
<dbReference type="eggNOG" id="KOG1089">
    <property type="taxonomic scope" value="Eukaryota"/>
</dbReference>
<dbReference type="GeneTree" id="ENSGT00940000157818"/>
<dbReference type="HOGENOM" id="CLU_001839_3_1_1"/>
<dbReference type="InParanoid" id="Q9Z2D0"/>
<dbReference type="OMA" id="IEREWIC"/>
<dbReference type="OrthoDB" id="271628at2759"/>
<dbReference type="PhylomeDB" id="Q9Z2D0"/>
<dbReference type="TreeFam" id="TF315197"/>
<dbReference type="Reactome" id="R-MMU-1660499">
    <property type="pathway name" value="Synthesis of PIPs at the plasma membrane"/>
</dbReference>
<dbReference type="BioGRID-ORCS" id="210376">
    <property type="hits" value="7 hits in 81 CRISPR screens"/>
</dbReference>
<dbReference type="ChiTaRS" id="Mtmr3">
    <property type="organism name" value="mouse"/>
</dbReference>
<dbReference type="PRO" id="PR:Q9Z2D0"/>
<dbReference type="Proteomes" id="UP000000589">
    <property type="component" value="Chromosome 14"/>
</dbReference>
<dbReference type="RNAct" id="Q9Z2D0">
    <property type="molecule type" value="protein"/>
</dbReference>
<dbReference type="Bgee" id="ENSMUSG00000035078">
    <property type="expression patterns" value="Expressed in cortical plate and 263 other cell types or tissues"/>
</dbReference>
<dbReference type="ExpressionAtlas" id="Q9Z2D0">
    <property type="expression patterns" value="baseline and differential"/>
</dbReference>
<dbReference type="GO" id="GO:0005829">
    <property type="term" value="C:cytosol"/>
    <property type="evidence" value="ECO:0000304"/>
    <property type="project" value="Reactome"/>
</dbReference>
<dbReference type="GO" id="GO:0005783">
    <property type="term" value="C:endoplasmic reticulum"/>
    <property type="evidence" value="ECO:0007669"/>
    <property type="project" value="UniProtKB-SubCell"/>
</dbReference>
<dbReference type="GO" id="GO:0048471">
    <property type="term" value="C:perinuclear region of cytoplasm"/>
    <property type="evidence" value="ECO:0007669"/>
    <property type="project" value="UniProtKB-SubCell"/>
</dbReference>
<dbReference type="GO" id="GO:0032991">
    <property type="term" value="C:protein-containing complex"/>
    <property type="evidence" value="ECO:0007669"/>
    <property type="project" value="Ensembl"/>
</dbReference>
<dbReference type="GO" id="GO:0032587">
    <property type="term" value="C:ruffle membrane"/>
    <property type="evidence" value="ECO:0007669"/>
    <property type="project" value="UniProtKB-SubCell"/>
</dbReference>
<dbReference type="GO" id="GO:0030234">
    <property type="term" value="F:enzyme regulator activity"/>
    <property type="evidence" value="ECO:0000314"/>
    <property type="project" value="MGI"/>
</dbReference>
<dbReference type="GO" id="GO:0019903">
    <property type="term" value="F:protein phosphatase binding"/>
    <property type="evidence" value="ECO:0007669"/>
    <property type="project" value="Ensembl"/>
</dbReference>
<dbReference type="GO" id="GO:0006897">
    <property type="term" value="P:endocytosis"/>
    <property type="evidence" value="ECO:0007669"/>
    <property type="project" value="UniProtKB-KW"/>
</dbReference>
<dbReference type="GO" id="GO:0010507">
    <property type="term" value="P:negative regulation of autophagy"/>
    <property type="evidence" value="ECO:0007669"/>
    <property type="project" value="Ensembl"/>
</dbReference>
<dbReference type="GO" id="GO:0050821">
    <property type="term" value="P:protein stabilization"/>
    <property type="evidence" value="ECO:0007669"/>
    <property type="project" value="Ensembl"/>
</dbReference>
<dbReference type="GO" id="GO:0060304">
    <property type="term" value="P:regulation of phosphatidylinositol dephosphorylation"/>
    <property type="evidence" value="ECO:0007669"/>
    <property type="project" value="Ensembl"/>
</dbReference>
<dbReference type="CDD" id="cd13211">
    <property type="entry name" value="PH-GRAM_MTMR9"/>
    <property type="match status" value="1"/>
</dbReference>
<dbReference type="CDD" id="cd14536">
    <property type="entry name" value="PTP-MTMR9"/>
    <property type="match status" value="1"/>
</dbReference>
<dbReference type="FunFam" id="2.30.29.30:FF:000240">
    <property type="entry name" value="Myotubularin-related protein 9"/>
    <property type="match status" value="1"/>
</dbReference>
<dbReference type="Gene3D" id="2.30.29.30">
    <property type="entry name" value="Pleckstrin-homology domain (PH domain)/Phosphotyrosine-binding domain (PTB)"/>
    <property type="match status" value="1"/>
</dbReference>
<dbReference type="InterPro" id="IPR030564">
    <property type="entry name" value="Myotubularin"/>
</dbReference>
<dbReference type="InterPro" id="IPR010569">
    <property type="entry name" value="Myotubularin-like_Pase_dom"/>
</dbReference>
<dbReference type="InterPro" id="IPR011993">
    <property type="entry name" value="PH-like_dom_sf"/>
</dbReference>
<dbReference type="InterPro" id="IPR029021">
    <property type="entry name" value="Prot-tyrosine_phosphatase-like"/>
</dbReference>
<dbReference type="PANTHER" id="PTHR10807">
    <property type="entry name" value="MYOTUBULARIN-RELATED"/>
    <property type="match status" value="1"/>
</dbReference>
<dbReference type="PANTHER" id="PTHR10807:SF56">
    <property type="entry name" value="MYOTUBULARIN-RELATED PROTEIN 9"/>
    <property type="match status" value="1"/>
</dbReference>
<dbReference type="Pfam" id="PF06602">
    <property type="entry name" value="Myotub-related"/>
    <property type="match status" value="1"/>
</dbReference>
<dbReference type="Pfam" id="PF21098">
    <property type="entry name" value="PH-GRAM_MTMR6-like"/>
    <property type="match status" value="1"/>
</dbReference>
<dbReference type="SUPFAM" id="SSF52799">
    <property type="entry name" value="(Phosphotyrosine protein) phosphatases II"/>
    <property type="match status" value="1"/>
</dbReference>
<dbReference type="SUPFAM" id="SSF50729">
    <property type="entry name" value="PH domain-like"/>
    <property type="match status" value="1"/>
</dbReference>
<dbReference type="PROSITE" id="PS51339">
    <property type="entry name" value="PPASE_MYOTUBULARIN"/>
    <property type="match status" value="1"/>
</dbReference>
<keyword id="KW-0007">Acetylation</keyword>
<keyword id="KW-1003">Cell membrane</keyword>
<keyword id="KW-0966">Cell projection</keyword>
<keyword id="KW-0175">Coiled coil</keyword>
<keyword id="KW-0963">Cytoplasm</keyword>
<keyword id="KW-0254">Endocytosis</keyword>
<keyword id="KW-0256">Endoplasmic reticulum</keyword>
<keyword id="KW-0472">Membrane</keyword>
<keyword id="KW-1185">Reference proteome</keyword>
<sequence>MEFAELIKTPRVDNVVLHRPFYTAVEGTLCLTGHHLILSSRQDNTEELWLLHSNIDAIDKRFVGSLGTIIIKCKDFRIIQLDIPGMEECLNIASSIEALSTLDSVTLMYPFFYRPMFEVIEDGWHSFLPEQEFEFYSSATSEWRLSYINKDFSICPSYPPTVIVPKSVDDEALRKVAAFRHGGRFPVLSYYHKKNGMVIMRSGQPLTGTNGRRCKEDEKLINATLRAGKRGYLIDTRSLNVAQQARAKGGGFEQEAHYPQWRRIHKSIERYHVLQESLIKLVEACNEQTHNMDRWLGKLEASNWLTHIKEILTTACLAAQCIDREGASVLIHGTEGTDSTLQVTSLAQIILEPRSRTIRGFEALIEREWLQAGHPFQQRCAQSAYCSSKQKWEAPVFLLFLDCVWQILRQFPCSFEFNEHFLIMLFEHAYASQFGTFLGNNESERCKLKLQQKTMSLWSWVNRPGELSKFTNPLFEANNLVIWPSVAPQSLQLWEGIFLRWSRSSKYLDEAYEEMVNIIEYNKELQAKVNVLRRQLAELETEDGL</sequence>